<feature type="chain" id="PRO_0000277320" description="Photosystem II protein D1" evidence="1">
    <location>
        <begin position="1"/>
        <end position="344"/>
    </location>
</feature>
<feature type="propeptide" id="PRO_0000316514" evidence="1">
    <location>
        <begin position="345"/>
        <end position="360"/>
    </location>
</feature>
<feature type="transmembrane region" description="Helical" evidence="1">
    <location>
        <begin position="29"/>
        <end position="46"/>
    </location>
</feature>
<feature type="transmembrane region" description="Helical" evidence="1">
    <location>
        <begin position="118"/>
        <end position="133"/>
    </location>
</feature>
<feature type="transmembrane region" description="Helical" evidence="1">
    <location>
        <begin position="142"/>
        <end position="156"/>
    </location>
</feature>
<feature type="transmembrane region" description="Helical" evidence="1">
    <location>
        <begin position="197"/>
        <end position="218"/>
    </location>
</feature>
<feature type="transmembrane region" description="Helical" evidence="1">
    <location>
        <begin position="274"/>
        <end position="288"/>
    </location>
</feature>
<feature type="binding site" description="axial binding residue" evidence="1">
    <location>
        <position position="118"/>
    </location>
    <ligand>
        <name>chlorophyll a</name>
        <dbReference type="ChEBI" id="CHEBI:58416"/>
        <label>ChlzD1</label>
    </ligand>
    <ligandPart>
        <name>Mg</name>
        <dbReference type="ChEBI" id="CHEBI:25107"/>
    </ligandPart>
</feature>
<feature type="binding site" evidence="1">
    <location>
        <position position="126"/>
    </location>
    <ligand>
        <name>pheophytin a</name>
        <dbReference type="ChEBI" id="CHEBI:136840"/>
        <label>D1</label>
    </ligand>
</feature>
<feature type="binding site" evidence="1">
    <location>
        <position position="170"/>
    </location>
    <ligand>
        <name>[CaMn4O5] cluster</name>
        <dbReference type="ChEBI" id="CHEBI:189552"/>
    </ligand>
</feature>
<feature type="binding site" evidence="1">
    <location>
        <position position="189"/>
    </location>
    <ligand>
        <name>[CaMn4O5] cluster</name>
        <dbReference type="ChEBI" id="CHEBI:189552"/>
    </ligand>
</feature>
<feature type="binding site" description="axial binding residue" evidence="1">
    <location>
        <position position="198"/>
    </location>
    <ligand>
        <name>chlorophyll a</name>
        <dbReference type="ChEBI" id="CHEBI:58416"/>
        <label>PD1</label>
    </ligand>
    <ligandPart>
        <name>Mg</name>
        <dbReference type="ChEBI" id="CHEBI:25107"/>
    </ligandPart>
</feature>
<feature type="binding site" evidence="1">
    <location>
        <position position="215"/>
    </location>
    <ligand>
        <name>a quinone</name>
        <dbReference type="ChEBI" id="CHEBI:132124"/>
        <label>B</label>
    </ligand>
</feature>
<feature type="binding site" evidence="1">
    <location>
        <position position="215"/>
    </location>
    <ligand>
        <name>Fe cation</name>
        <dbReference type="ChEBI" id="CHEBI:24875"/>
        <note>ligand shared with heterodimeric partner</note>
    </ligand>
</feature>
<feature type="binding site" evidence="1">
    <location>
        <begin position="264"/>
        <end position="265"/>
    </location>
    <ligand>
        <name>a quinone</name>
        <dbReference type="ChEBI" id="CHEBI:132124"/>
        <label>B</label>
    </ligand>
</feature>
<feature type="binding site" evidence="1">
    <location>
        <position position="272"/>
    </location>
    <ligand>
        <name>Fe cation</name>
        <dbReference type="ChEBI" id="CHEBI:24875"/>
        <note>ligand shared with heterodimeric partner</note>
    </ligand>
</feature>
<feature type="binding site" evidence="1">
    <location>
        <position position="332"/>
    </location>
    <ligand>
        <name>[CaMn4O5] cluster</name>
        <dbReference type="ChEBI" id="CHEBI:189552"/>
    </ligand>
</feature>
<feature type="binding site" evidence="1">
    <location>
        <position position="333"/>
    </location>
    <ligand>
        <name>[CaMn4O5] cluster</name>
        <dbReference type="ChEBI" id="CHEBI:189552"/>
    </ligand>
</feature>
<feature type="binding site" evidence="1">
    <location>
        <position position="342"/>
    </location>
    <ligand>
        <name>[CaMn4O5] cluster</name>
        <dbReference type="ChEBI" id="CHEBI:189552"/>
    </ligand>
</feature>
<feature type="binding site" evidence="1">
    <location>
        <position position="344"/>
    </location>
    <ligand>
        <name>[CaMn4O5] cluster</name>
        <dbReference type="ChEBI" id="CHEBI:189552"/>
    </ligand>
</feature>
<feature type="site" description="Tyrosine radical intermediate" evidence="1">
    <location>
        <position position="161"/>
    </location>
</feature>
<feature type="site" description="Stabilizes free radical intermediate" evidence="1">
    <location>
        <position position="190"/>
    </location>
</feature>
<feature type="site" description="Cleavage; by CTPA" evidence="1">
    <location>
        <begin position="344"/>
        <end position="345"/>
    </location>
</feature>
<reference key="1">
    <citation type="submission" date="2003-11" db="EMBL/GenBank/DDBJ databases">
        <title>Whole genome sequence of Porphyra yezoensis chloroplast.</title>
        <authorList>
            <person name="Kunimoto M."/>
            <person name="Morishima K."/>
            <person name="Yoshikawa M."/>
            <person name="Fukuda S."/>
            <person name="Kobayashi T."/>
            <person name="Kobayashi M."/>
            <person name="Okazaki T."/>
            <person name="Ohara I."/>
            <person name="Nakayama I."/>
        </authorList>
    </citation>
    <scope>NUCLEOTIDE SEQUENCE [LARGE SCALE GENOMIC DNA]</scope>
    <source>
        <strain>U-51</strain>
    </source>
</reference>
<evidence type="ECO:0000255" key="1">
    <source>
        <dbReference type="HAMAP-Rule" id="MF_01379"/>
    </source>
</evidence>
<protein>
    <recommendedName>
        <fullName evidence="1">Photosystem II protein D1</fullName>
        <shortName evidence="1">PSII D1 protein</shortName>
        <ecNumber evidence="1">1.10.3.9</ecNumber>
    </recommendedName>
    <alternativeName>
        <fullName evidence="1">Photosystem II Q(B) protein</fullName>
    </alternativeName>
</protein>
<gene>
    <name evidence="1" type="primary">psbA</name>
</gene>
<keyword id="KW-0106">Calcium</keyword>
<keyword id="KW-0148">Chlorophyll</keyword>
<keyword id="KW-0150">Chloroplast</keyword>
<keyword id="KW-0157">Chromophore</keyword>
<keyword id="KW-0249">Electron transport</keyword>
<keyword id="KW-0359">Herbicide resistance</keyword>
<keyword id="KW-0408">Iron</keyword>
<keyword id="KW-0460">Magnesium</keyword>
<keyword id="KW-0464">Manganese</keyword>
<keyword id="KW-0472">Membrane</keyword>
<keyword id="KW-0479">Metal-binding</keyword>
<keyword id="KW-0560">Oxidoreductase</keyword>
<keyword id="KW-0602">Photosynthesis</keyword>
<keyword id="KW-0604">Photosystem II</keyword>
<keyword id="KW-0934">Plastid</keyword>
<keyword id="KW-0793">Thylakoid</keyword>
<keyword id="KW-0812">Transmembrane</keyword>
<keyword id="KW-1133">Transmembrane helix</keyword>
<keyword id="KW-0813">Transport</keyword>
<geneLocation type="chloroplast"/>
<name>PSBA_PYRYE</name>
<dbReference type="EC" id="1.10.3.9" evidence="1"/>
<dbReference type="EMBL" id="AP006715">
    <property type="protein sequence ID" value="BAE92336.1"/>
    <property type="molecule type" value="Genomic_DNA"/>
</dbReference>
<dbReference type="RefSeq" id="YP_536893.1">
    <property type="nucleotide sequence ID" value="NC_007932.1"/>
</dbReference>
<dbReference type="SMR" id="Q1XDS5"/>
<dbReference type="GeneID" id="3978957"/>
<dbReference type="GO" id="GO:0009535">
    <property type="term" value="C:chloroplast thylakoid membrane"/>
    <property type="evidence" value="ECO:0007669"/>
    <property type="project" value="UniProtKB-SubCell"/>
</dbReference>
<dbReference type="GO" id="GO:0009523">
    <property type="term" value="C:photosystem II"/>
    <property type="evidence" value="ECO:0007669"/>
    <property type="project" value="UniProtKB-KW"/>
</dbReference>
<dbReference type="GO" id="GO:0016168">
    <property type="term" value="F:chlorophyll binding"/>
    <property type="evidence" value="ECO:0007669"/>
    <property type="project" value="UniProtKB-UniRule"/>
</dbReference>
<dbReference type="GO" id="GO:0045156">
    <property type="term" value="F:electron transporter, transferring electrons within the cyclic electron transport pathway of photosynthesis activity"/>
    <property type="evidence" value="ECO:0007669"/>
    <property type="project" value="InterPro"/>
</dbReference>
<dbReference type="GO" id="GO:0005506">
    <property type="term" value="F:iron ion binding"/>
    <property type="evidence" value="ECO:0007669"/>
    <property type="project" value="UniProtKB-UniRule"/>
</dbReference>
<dbReference type="GO" id="GO:0016682">
    <property type="term" value="F:oxidoreductase activity, acting on diphenols and related substances as donors, oxygen as acceptor"/>
    <property type="evidence" value="ECO:0007669"/>
    <property type="project" value="UniProtKB-UniRule"/>
</dbReference>
<dbReference type="GO" id="GO:0009772">
    <property type="term" value="P:photosynthetic electron transport in photosystem II"/>
    <property type="evidence" value="ECO:0007669"/>
    <property type="project" value="InterPro"/>
</dbReference>
<dbReference type="GO" id="GO:0009635">
    <property type="term" value="P:response to herbicide"/>
    <property type="evidence" value="ECO:0007669"/>
    <property type="project" value="UniProtKB-KW"/>
</dbReference>
<dbReference type="CDD" id="cd09289">
    <property type="entry name" value="Photosystem-II_D1"/>
    <property type="match status" value="1"/>
</dbReference>
<dbReference type="FunFam" id="1.20.85.10:FF:000002">
    <property type="entry name" value="Photosystem II protein D1"/>
    <property type="match status" value="1"/>
</dbReference>
<dbReference type="Gene3D" id="1.20.85.10">
    <property type="entry name" value="Photosystem II protein D1-like"/>
    <property type="match status" value="1"/>
</dbReference>
<dbReference type="HAMAP" id="MF_01379">
    <property type="entry name" value="PSII_PsbA_D1"/>
    <property type="match status" value="1"/>
</dbReference>
<dbReference type="InterPro" id="IPR055266">
    <property type="entry name" value="D1/D2"/>
</dbReference>
<dbReference type="InterPro" id="IPR036854">
    <property type="entry name" value="Photo_II_D1/D2_sf"/>
</dbReference>
<dbReference type="InterPro" id="IPR000484">
    <property type="entry name" value="Photo_RC_L/M"/>
</dbReference>
<dbReference type="InterPro" id="IPR055265">
    <property type="entry name" value="Photo_RC_L/M_CS"/>
</dbReference>
<dbReference type="InterPro" id="IPR005867">
    <property type="entry name" value="PSII_D1"/>
</dbReference>
<dbReference type="NCBIfam" id="TIGR01151">
    <property type="entry name" value="psbA"/>
    <property type="match status" value="1"/>
</dbReference>
<dbReference type="PANTHER" id="PTHR33149:SF12">
    <property type="entry name" value="PHOTOSYSTEM II D2 PROTEIN"/>
    <property type="match status" value="1"/>
</dbReference>
<dbReference type="PANTHER" id="PTHR33149">
    <property type="entry name" value="PHOTOSYSTEM II PROTEIN D1"/>
    <property type="match status" value="1"/>
</dbReference>
<dbReference type="Pfam" id="PF00124">
    <property type="entry name" value="Photo_RC"/>
    <property type="match status" value="1"/>
</dbReference>
<dbReference type="PRINTS" id="PR00256">
    <property type="entry name" value="REACTNCENTRE"/>
</dbReference>
<dbReference type="SUPFAM" id="SSF81483">
    <property type="entry name" value="Bacterial photosystem II reaction centre, L and M subunits"/>
    <property type="match status" value="1"/>
</dbReference>
<dbReference type="PROSITE" id="PS00244">
    <property type="entry name" value="REACTION_CENTER"/>
    <property type="match status" value="1"/>
</dbReference>
<organism>
    <name type="scientific">Pyropia yezoensis</name>
    <name type="common">Susabi-nori</name>
    <name type="synonym">Porphyra yezoensis</name>
    <dbReference type="NCBI Taxonomy" id="2788"/>
    <lineage>
        <taxon>Eukaryota</taxon>
        <taxon>Rhodophyta</taxon>
        <taxon>Bangiophyceae</taxon>
        <taxon>Bangiales</taxon>
        <taxon>Bangiaceae</taxon>
        <taxon>Pyropia</taxon>
    </lineage>
</organism>
<sequence>MTATLQRRESASLWERFCSWITSTENRLYIGWFGVLMIPTLLTATSVFIIAFVAAPPVDIDGIREPVAGSLLYGNNIISGAVIPSSAAIGIHFYPIWEAASLDEWLYNGGPYQLVVLHFLTGVACYIGREWELSYRLGMRPWISVAFTAPVAAAAAVFLVYPIGQGSFSDGMPLGISGTFNFMLVFQAEHNILMHPFHQLGVAGVFGGSLFSAMHGSLVTSSLIRETSENESANYGYKFGQEEETYNIVAAHGYFGRLIFQYASFNNSRSLHFFLGLWPVVGIWLTALSVSTMAFNLNGFNFNQSVVDSQGRVINTWADIINRANLGMEVMHERNAHNFPLDLASGESLPVALTAPAVNG</sequence>
<proteinExistence type="inferred from homology"/>
<accession>Q1XDS5</accession>
<comment type="function">
    <text evidence="1">Photosystem II (PSII) is a light-driven water:plastoquinone oxidoreductase that uses light energy to abstract electrons from H(2)O, generating O(2) and a proton gradient subsequently used for ATP formation. It consists of a core antenna complex that captures photons, and an electron transfer chain that converts photonic excitation into a charge separation. The D1/D2 (PsbA/PsbD) reaction center heterodimer binds P680, the primary electron donor of PSII as well as several subsequent electron acceptors.</text>
</comment>
<comment type="catalytic activity">
    <reaction evidence="1">
        <text>2 a plastoquinone + 4 hnu + 2 H2O = 2 a plastoquinol + O2</text>
        <dbReference type="Rhea" id="RHEA:36359"/>
        <dbReference type="Rhea" id="RHEA-COMP:9561"/>
        <dbReference type="Rhea" id="RHEA-COMP:9562"/>
        <dbReference type="ChEBI" id="CHEBI:15377"/>
        <dbReference type="ChEBI" id="CHEBI:15379"/>
        <dbReference type="ChEBI" id="CHEBI:17757"/>
        <dbReference type="ChEBI" id="CHEBI:30212"/>
        <dbReference type="ChEBI" id="CHEBI:62192"/>
        <dbReference type="EC" id="1.10.3.9"/>
    </reaction>
</comment>
<comment type="cofactor">
    <text evidence="1">The D1/D2 heterodimer binds P680, chlorophylls that are the primary electron donor of PSII, and subsequent electron acceptors. It shares a non-heme iron and each subunit binds pheophytin, quinone, additional chlorophylls, carotenoids and lipids. D1 provides most of the ligands for the Mn4-Ca-O5 cluster of the oxygen-evolving complex (OEC). There is also a Cl(-1) ion associated with D1 and D2, which is required for oxygen evolution. The PSII complex binds additional chlorophylls, carotenoids and specific lipids.</text>
</comment>
<comment type="subunit">
    <text evidence="1">PSII is composed of 1 copy each of membrane proteins PsbA, PsbB, PsbC, PsbD, PsbE, PsbF, PsbH, PsbI, PsbJ, PsbK, PsbL, PsbM, PsbT, PsbX, PsbY, PsbZ, Psb30/Ycf12, at least 3 peripheral proteins of the oxygen-evolving complex and a large number of cofactors. It forms dimeric complexes.</text>
</comment>
<comment type="subcellular location">
    <subcellularLocation>
        <location evidence="1">Plastid</location>
        <location evidence="1">Chloroplast thylakoid membrane</location>
        <topology evidence="1">Multi-pass membrane protein</topology>
    </subcellularLocation>
</comment>
<comment type="PTM">
    <text evidence="1">Tyr-161 forms a radical intermediate that is referred to as redox-active TyrZ, YZ or Y-Z.</text>
</comment>
<comment type="PTM">
    <text evidence="1">C-terminally processed by CTPA; processing is essential to allow assembly of the oxygen-evolving complex and thus photosynthetic growth.</text>
</comment>
<comment type="miscellaneous">
    <text evidence="1">2 of the reaction center chlorophylls (ChlD1 and ChlD2) are entirely coordinated by water.</text>
</comment>
<comment type="miscellaneous">
    <text evidence="1">Herbicides such as atrazine, BNT, diuron or ioxynil bind in the Q(B) binding site and block subsequent electron transfer.</text>
</comment>
<comment type="similarity">
    <text evidence="1">Belongs to the reaction center PufL/M/PsbA/D family.</text>
</comment>